<proteinExistence type="inferred from homology"/>
<reference key="1">
    <citation type="submission" date="2007-05" db="EMBL/GenBank/DDBJ databases">
        <title>Complete sequence of Thermosipho melanesiensis BI429.</title>
        <authorList>
            <consortium name="US DOE Joint Genome Institute"/>
            <person name="Copeland A."/>
            <person name="Lucas S."/>
            <person name="Lapidus A."/>
            <person name="Barry K."/>
            <person name="Glavina del Rio T."/>
            <person name="Dalin E."/>
            <person name="Tice H."/>
            <person name="Pitluck S."/>
            <person name="Chertkov O."/>
            <person name="Brettin T."/>
            <person name="Bruce D."/>
            <person name="Detter J.C."/>
            <person name="Han C."/>
            <person name="Schmutz J."/>
            <person name="Larimer F."/>
            <person name="Land M."/>
            <person name="Hauser L."/>
            <person name="Kyrpides N."/>
            <person name="Mikhailova N."/>
            <person name="Nelson K."/>
            <person name="Gogarten J.P."/>
            <person name="Noll K."/>
            <person name="Richardson P."/>
        </authorList>
    </citation>
    <scope>NUCLEOTIDE SEQUENCE [LARGE SCALE GENOMIC DNA]</scope>
    <source>
        <strain>DSM 12029 / CIP 104789 / BI429</strain>
    </source>
</reference>
<comment type="function">
    <text evidence="1">One of the primary rRNA binding proteins, this protein initially binds near the 5'-end of the 23S rRNA. It is important during the early stages of 50S assembly. It makes multiple contacts with different domains of the 23S rRNA in the assembled 50S subunit and ribosome.</text>
</comment>
<comment type="function">
    <text evidence="1">Forms part of the polypeptide exit tunnel.</text>
</comment>
<comment type="subunit">
    <text evidence="1">Part of the 50S ribosomal subunit.</text>
</comment>
<comment type="similarity">
    <text evidence="1">Belongs to the universal ribosomal protein uL4 family.</text>
</comment>
<protein>
    <recommendedName>
        <fullName evidence="1">Large ribosomal subunit protein uL4</fullName>
    </recommendedName>
    <alternativeName>
        <fullName evidence="3">50S ribosomal protein L4</fullName>
    </alternativeName>
</protein>
<organism>
    <name type="scientific">Thermosipho melanesiensis (strain DSM 12029 / CIP 104789 / BI429)</name>
    <dbReference type="NCBI Taxonomy" id="391009"/>
    <lineage>
        <taxon>Bacteria</taxon>
        <taxon>Thermotogati</taxon>
        <taxon>Thermotogota</taxon>
        <taxon>Thermotogae</taxon>
        <taxon>Thermotogales</taxon>
        <taxon>Fervidobacteriaceae</taxon>
        <taxon>Thermosipho</taxon>
    </lineage>
</organism>
<sequence>MAKVDLFNIKGENIGTVELKEEVFAIEPNQDVMWRYIDMQLTNSRAGTASTKTRGEVSGGGRKPWIQKHTGRARQGSIRAPHWRHGGVAHGPKPRVYFKRLNKKMKRLALKSALSLRLKENNLVVVDDIKFEKPRTKDLREVLKNLGLENQKVLIVLPKKESEYENVKISGRNIPGVKVLIADNPGVDRVNIDGLNVYDILNHDKLVLLQGTVQKIEEVLG</sequence>
<feature type="chain" id="PRO_1000052521" description="Large ribosomal subunit protein uL4">
    <location>
        <begin position="1"/>
        <end position="221"/>
    </location>
</feature>
<feature type="region of interest" description="Disordered" evidence="2">
    <location>
        <begin position="47"/>
        <end position="77"/>
    </location>
</feature>
<name>RL4_THEM4</name>
<dbReference type="EMBL" id="CP000716">
    <property type="protein sequence ID" value="ABR30815.1"/>
    <property type="molecule type" value="Genomic_DNA"/>
</dbReference>
<dbReference type="RefSeq" id="WP_012057176.1">
    <property type="nucleotide sequence ID" value="NC_009616.1"/>
</dbReference>
<dbReference type="SMR" id="A6LLL4"/>
<dbReference type="STRING" id="391009.Tmel_0954"/>
<dbReference type="KEGG" id="tme:Tmel_0954"/>
<dbReference type="eggNOG" id="COG0088">
    <property type="taxonomic scope" value="Bacteria"/>
</dbReference>
<dbReference type="HOGENOM" id="CLU_041575_5_2_0"/>
<dbReference type="OrthoDB" id="9803201at2"/>
<dbReference type="Proteomes" id="UP000001110">
    <property type="component" value="Chromosome"/>
</dbReference>
<dbReference type="GO" id="GO:1990904">
    <property type="term" value="C:ribonucleoprotein complex"/>
    <property type="evidence" value="ECO:0007669"/>
    <property type="project" value="UniProtKB-KW"/>
</dbReference>
<dbReference type="GO" id="GO:0005840">
    <property type="term" value="C:ribosome"/>
    <property type="evidence" value="ECO:0007669"/>
    <property type="project" value="UniProtKB-KW"/>
</dbReference>
<dbReference type="GO" id="GO:0019843">
    <property type="term" value="F:rRNA binding"/>
    <property type="evidence" value="ECO:0007669"/>
    <property type="project" value="UniProtKB-UniRule"/>
</dbReference>
<dbReference type="GO" id="GO:0003735">
    <property type="term" value="F:structural constituent of ribosome"/>
    <property type="evidence" value="ECO:0007669"/>
    <property type="project" value="InterPro"/>
</dbReference>
<dbReference type="GO" id="GO:0006412">
    <property type="term" value="P:translation"/>
    <property type="evidence" value="ECO:0007669"/>
    <property type="project" value="UniProtKB-UniRule"/>
</dbReference>
<dbReference type="Gene3D" id="3.40.1370.10">
    <property type="match status" value="1"/>
</dbReference>
<dbReference type="HAMAP" id="MF_01328_B">
    <property type="entry name" value="Ribosomal_uL4_B"/>
    <property type="match status" value="1"/>
</dbReference>
<dbReference type="InterPro" id="IPR002136">
    <property type="entry name" value="Ribosomal_uL4"/>
</dbReference>
<dbReference type="InterPro" id="IPR013005">
    <property type="entry name" value="Ribosomal_uL4-like"/>
</dbReference>
<dbReference type="InterPro" id="IPR023574">
    <property type="entry name" value="Ribosomal_uL4_dom_sf"/>
</dbReference>
<dbReference type="NCBIfam" id="TIGR03953">
    <property type="entry name" value="rplD_bact"/>
    <property type="match status" value="1"/>
</dbReference>
<dbReference type="PANTHER" id="PTHR10746">
    <property type="entry name" value="50S RIBOSOMAL PROTEIN L4"/>
    <property type="match status" value="1"/>
</dbReference>
<dbReference type="PANTHER" id="PTHR10746:SF6">
    <property type="entry name" value="LARGE RIBOSOMAL SUBUNIT PROTEIN UL4M"/>
    <property type="match status" value="1"/>
</dbReference>
<dbReference type="Pfam" id="PF00573">
    <property type="entry name" value="Ribosomal_L4"/>
    <property type="match status" value="1"/>
</dbReference>
<dbReference type="SUPFAM" id="SSF52166">
    <property type="entry name" value="Ribosomal protein L4"/>
    <property type="match status" value="1"/>
</dbReference>
<keyword id="KW-0687">Ribonucleoprotein</keyword>
<keyword id="KW-0689">Ribosomal protein</keyword>
<keyword id="KW-0694">RNA-binding</keyword>
<keyword id="KW-0699">rRNA-binding</keyword>
<gene>
    <name evidence="1" type="primary">rplD</name>
    <name type="ordered locus">Tmel_0954</name>
</gene>
<accession>A6LLL4</accession>
<evidence type="ECO:0000255" key="1">
    <source>
        <dbReference type="HAMAP-Rule" id="MF_01328"/>
    </source>
</evidence>
<evidence type="ECO:0000256" key="2">
    <source>
        <dbReference type="SAM" id="MobiDB-lite"/>
    </source>
</evidence>
<evidence type="ECO:0000305" key="3"/>